<keyword id="KW-0002">3D-structure</keyword>
<keyword id="KW-0066">ATP synthesis</keyword>
<keyword id="KW-0139">CF(1)</keyword>
<keyword id="KW-0903">Direct protein sequencing</keyword>
<keyword id="KW-0375">Hydrogen ion transport</keyword>
<keyword id="KW-0406">Ion transport</keyword>
<keyword id="KW-0472">Membrane</keyword>
<keyword id="KW-0496">Mitochondrion</keyword>
<keyword id="KW-0999">Mitochondrion inner membrane</keyword>
<keyword id="KW-0813">Transport</keyword>
<proteinExistence type="evidence at protein level"/>
<name>ATPG_PICAN</name>
<feature type="chain" id="PRO_0000445317" description="ATP synthase subunit gamma, mitochondrial" evidence="5">
    <location>
        <begin position="1"/>
        <end position="269"/>
    </location>
</feature>
<gene>
    <name evidence="1" type="primary">ATP3</name>
</gene>
<dbReference type="PDB" id="5LQX">
    <property type="method" value="EM"/>
    <property type="resolution" value="7.90 A"/>
    <property type="chains" value="G=1-269"/>
</dbReference>
<dbReference type="PDB" id="5LQY">
    <property type="method" value="EM"/>
    <property type="resolution" value="7.80 A"/>
    <property type="chains" value="G=1-269"/>
</dbReference>
<dbReference type="PDB" id="5LQZ">
    <property type="method" value="EM"/>
    <property type="resolution" value="7.00 A"/>
    <property type="chains" value="G=1-269"/>
</dbReference>
<dbReference type="PDBsum" id="5LQX"/>
<dbReference type="PDBsum" id="5LQY"/>
<dbReference type="PDBsum" id="5LQZ"/>
<dbReference type="EMDB" id="EMD-4100"/>
<dbReference type="EMDB" id="EMD-4101"/>
<dbReference type="EMDB" id="EMD-4102"/>
<dbReference type="SMR" id="C0HK53"/>
<dbReference type="GO" id="GO:0005743">
    <property type="term" value="C:mitochondrial inner membrane"/>
    <property type="evidence" value="ECO:0007669"/>
    <property type="project" value="UniProtKB-SubCell"/>
</dbReference>
<dbReference type="GO" id="GO:0045259">
    <property type="term" value="C:proton-transporting ATP synthase complex"/>
    <property type="evidence" value="ECO:0007669"/>
    <property type="project" value="UniProtKB-KW"/>
</dbReference>
<dbReference type="GO" id="GO:0046933">
    <property type="term" value="F:proton-transporting ATP synthase activity, rotational mechanism"/>
    <property type="evidence" value="ECO:0007669"/>
    <property type="project" value="InterPro"/>
</dbReference>
<dbReference type="CDD" id="cd12151">
    <property type="entry name" value="F1-ATPase_gamma"/>
    <property type="match status" value="1"/>
</dbReference>
<dbReference type="FunFam" id="1.10.287.80:FF:000001">
    <property type="entry name" value="ATP synthase gamma chain"/>
    <property type="match status" value="1"/>
</dbReference>
<dbReference type="FunFam" id="3.40.1380.10:FF:000003">
    <property type="entry name" value="ATP synthase subunit gamma"/>
    <property type="match status" value="1"/>
</dbReference>
<dbReference type="Gene3D" id="3.40.1380.10">
    <property type="match status" value="1"/>
</dbReference>
<dbReference type="Gene3D" id="1.10.287.80">
    <property type="entry name" value="ATP synthase, gamma subunit, helix hairpin domain"/>
    <property type="match status" value="1"/>
</dbReference>
<dbReference type="InterPro" id="IPR035968">
    <property type="entry name" value="ATP_synth_F1_ATPase_gsu"/>
</dbReference>
<dbReference type="InterPro" id="IPR000131">
    <property type="entry name" value="ATP_synth_F1_gsu"/>
</dbReference>
<dbReference type="InterPro" id="IPR023632">
    <property type="entry name" value="ATP_synth_F1_gsu_CS"/>
</dbReference>
<dbReference type="NCBIfam" id="TIGR01146">
    <property type="entry name" value="ATPsyn_F1gamma"/>
    <property type="match status" value="1"/>
</dbReference>
<dbReference type="PANTHER" id="PTHR11693">
    <property type="entry name" value="ATP SYNTHASE GAMMA CHAIN"/>
    <property type="match status" value="1"/>
</dbReference>
<dbReference type="PANTHER" id="PTHR11693:SF22">
    <property type="entry name" value="ATP SYNTHASE SUBUNIT GAMMA, MITOCHONDRIAL"/>
    <property type="match status" value="1"/>
</dbReference>
<dbReference type="Pfam" id="PF00231">
    <property type="entry name" value="ATP-synt"/>
    <property type="match status" value="1"/>
</dbReference>
<dbReference type="PIRSF" id="PIRSF039089">
    <property type="entry name" value="ATP_synthase_gamma"/>
    <property type="match status" value="1"/>
</dbReference>
<dbReference type="PRINTS" id="PR00126">
    <property type="entry name" value="ATPASEGAMMA"/>
</dbReference>
<dbReference type="SUPFAM" id="SSF52943">
    <property type="entry name" value="ATP synthase (F1-ATPase), gamma subunit"/>
    <property type="match status" value="1"/>
</dbReference>
<dbReference type="PROSITE" id="PS00153">
    <property type="entry name" value="ATPASE_GAMMA"/>
    <property type="match status" value="1"/>
</dbReference>
<evidence type="ECO:0000250" key="1">
    <source>
        <dbReference type="UniProtKB" id="P38077"/>
    </source>
</evidence>
<evidence type="ECO:0000250" key="2">
    <source>
        <dbReference type="UniProtKB" id="Q6C338"/>
    </source>
</evidence>
<evidence type="ECO:0000269" key="3">
    <source>
    </source>
</evidence>
<evidence type="ECO:0000269" key="4">
    <source>
    </source>
</evidence>
<evidence type="ECO:0000269" key="5">
    <source ref="1"/>
</evidence>
<evidence type="ECO:0000303" key="6">
    <source>
    </source>
</evidence>
<evidence type="ECO:0000303" key="7">
    <source ref="1"/>
</evidence>
<evidence type="ECO:0000305" key="8"/>
<evidence type="ECO:0000305" key="9">
    <source>
    </source>
</evidence>
<evidence type="ECO:0007744" key="10">
    <source>
        <dbReference type="PDB" id="5LQX"/>
    </source>
</evidence>
<evidence type="ECO:0007744" key="11">
    <source>
        <dbReference type="PDB" id="5LQY"/>
    </source>
</evidence>
<evidence type="ECO:0007744" key="12">
    <source>
        <dbReference type="PDB" id="5LQZ"/>
    </source>
</evidence>
<accession>C0HK53</accession>
<sequence>ATLREIETRLKSIKNIEKITNTMKVVASTRMGRAQRAMASSRAFREGDSDFFATAETSTPETAEKTLIIAVSSDKGLCGSIHSQIAKATRAKLQETPNADVVTIGDKIKAQMLRTHSSNVVLSFNGVGKEAPTFWEASLIADEIRKLGDYDKIEVMYNKFVSGVAFEPSVFPSFSPISIEESPKLSEFELEEDQAIPTSLSQISLTNAILNAMAEGYASEISARRNAMDNASKNAGEMINKYSILYNRTRQAVITNELVDIITGASSLD</sequence>
<reference evidence="8" key="1">
    <citation type="submission" date="2016-08" db="UniProtKB">
        <authorList>
            <person name="Fearnley I.M."/>
        </authorList>
    </citation>
    <scope>PARTIAL PROTEIN SEQUENCE</scope>
    <source>
        <strain evidence="7">A16 / NCYC 2310</strain>
    </source>
</reference>
<reference evidence="8" key="2">
    <citation type="journal article" date="2015" name="Biochem. J.">
        <title>The purification and characterization of ATP synthase complexes from the mitochondria of four fungal species.</title>
        <authorList>
            <person name="Liu S."/>
            <person name="Charlesworth T.J."/>
            <person name="Bason J.V."/>
            <person name="Montgomery M.G."/>
            <person name="Harbour M.E."/>
            <person name="Fearnley I.M."/>
            <person name="Walker J.E."/>
        </authorList>
    </citation>
    <scope>PROTEIN SEQUENCE OF 1-7</scope>
    <scope>IDENTIFICATION IN ATP SYNTHASE COMPLEX</scope>
    <scope>FUNCTION OF ATPASE COMPLEX</scope>
    <scope>SUBUNIT</scope>
    <scope>SUBCELLULAR LOCATION</scope>
    <scope>MASS SPECTROMETRY</scope>
    <scope>IDENTIFICATION BY MASS SPECTROMETRY</scope>
    <source>
        <strain evidence="6">A16 / NCYC 2310</strain>
    </source>
</reference>
<reference evidence="10 11 12" key="3">
    <citation type="journal article" date="2016" name="Proc. Natl. Acad. Sci. U.S.A.">
        <title>Structure of the mitochondrial ATP synthase from Pichia angusta determined by electron cryo-microscopy.</title>
        <authorList>
            <person name="Vinothkumar K.R."/>
            <person name="Montgomery M.G."/>
            <person name="Liu S."/>
            <person name="Walker J.E."/>
        </authorList>
    </citation>
    <scope>STRUCTURE BY ELECTRON MICROSCOPY (7.0 ANGSTROMS) OF MONOMERIC ATP SYNTHASE COMPLEX IN COMPLEX WITH BOVINE ATPIF1</scope>
    <scope>FUNCTION</scope>
    <scope>SUBUNIT</scope>
    <scope>SUBCELLULAR LOCATION</scope>
</reference>
<comment type="function">
    <text evidence="2 3 4">Mitochondrial membrane ATP synthase (F(1)F(0) ATP synthase or Complex V) produces ATP from ADP in the presence of a proton gradient across the membrane which is generated by electron transport complexes of the respiratory chain (PubMed:25759169). F-type ATP synthases consist of two structural domains, F(1) - containing the extramembraneous catalytic core, and F(0) - containing the membrane proton channel, linked together by a central stalk and a peripheral stalk (PubMed:27791192). During catalysis, ATP synthesis in the catalytic domain of F(1) is coupled via a rotary mechanism of the central stalk subunits to proton translocation (By similarity). Part of the complex F(1) domain and the central stalk which is part of the complex rotary element (By similarity). The gamma/ATP3 subunit protrudes into the catalytic domain formed of alpha/ATP1(3)beta/ATP2(3) (By similarity). Rotation of the central stalk against the surrounding alpha/ATP1(3)beta/ATP2(3) subunits leads to hydrolysis of ATP in three separate catalytic sites on the beta/ATP2 subunits (By similarity).</text>
</comment>
<comment type="subunit">
    <text evidence="2 3 4">F-type ATP synthases have 2 components, the catalytic core F(1) and the membrane-embedded component F(0), linked together by a central stalk and a peripheral stalk (PubMed:27791192). The central stalk, also called rotor shaft, is often seen as part of F(1) (PubMed:27791192). The peripheral stalk is seen as part of F(0). F(0) contains the membrane channel next to the rotor (PubMed:27791192). F-type ATP synthases form dimers but each monomer functions independently in ATP generation (By similarity). The dimer consists of 18 different polypeptides: ATP1 (subunit alpha, part of F(1), 3 molecules per monomer), ATP2 (subunit beta, part of F(1), 3 molecules per monomer), ATP3 (subunit gamma, part of the central stalk), ATP4 (subunit b, part of the peripheral stalk), ATP5/OSCP (subunit 5/OSCP, part of the peripheral stalk), ATP6 (subunit a, part of the peripheral stalk), ATP7 (subunit d, part of the peripheral stalk), ATP8 (subunit 8, part of the peripheral stalk), OLI1 (subunit c, part of the rotor, 10 molecules per monomer), ATP14 (subunit h, part of the peripheral stalk), ATP15 (subunit epsilon, part of the central stalk), ATP16 (subunit delta, part of the central stalk), ATP17 (subunit f, part of the peripheral stalk), ATP18 (subunit i/j, part of the peripheral stalk) (PubMed:25759169, PubMed:27791192). Dimer-specific subunits are ATP19 (subunit k, at interface between monomers), ATP20 (subunit g, at interface between monomers), TIM11 (subunit e, at interface between monomers) (By similarity). Also contains subunit L (PubMed:25759169).</text>
</comment>
<comment type="subcellular location">
    <subcellularLocation>
        <location evidence="9">Mitochondrion inner membrane</location>
        <topology evidence="9">Peripheral membrane protein</topology>
        <orientation evidence="9">Matrix side</orientation>
    </subcellularLocation>
    <text evidence="9">The F-type ATP synthase complex is anchored in the mitochondrial inner membrane via the F(0) domain with the F(1) domain and the peripheral stalk extending into the mitochondrial matrix.</text>
</comment>
<comment type="mass spectrometry"/>
<comment type="similarity">
    <text evidence="8">Belongs to the ATPase gamma chain family.</text>
</comment>
<protein>
    <recommendedName>
        <fullName evidence="1">ATP synthase subunit gamma, mitochondrial</fullName>
    </recommendedName>
    <alternativeName>
        <fullName evidence="1">F-ATPase gamma subunit</fullName>
    </alternativeName>
</protein>
<organism evidence="6">
    <name type="scientific">Pichia angusta</name>
    <name type="common">Yeast</name>
    <name type="synonym">Hansenula polymorpha</name>
    <dbReference type="NCBI Taxonomy" id="870730"/>
    <lineage>
        <taxon>Eukaryota</taxon>
        <taxon>Fungi</taxon>
        <taxon>Dikarya</taxon>
        <taxon>Ascomycota</taxon>
        <taxon>Saccharomycotina</taxon>
        <taxon>Pichiomycetes</taxon>
        <taxon>Pichiales</taxon>
        <taxon>Pichiaceae</taxon>
        <taxon>Ogataea</taxon>
    </lineage>
</organism>